<gene>
    <name evidence="1" type="primary">clpS</name>
    <name type="ordered locus">VP1013</name>
</gene>
<organism>
    <name type="scientific">Vibrio parahaemolyticus serotype O3:K6 (strain RIMD 2210633)</name>
    <dbReference type="NCBI Taxonomy" id="223926"/>
    <lineage>
        <taxon>Bacteria</taxon>
        <taxon>Pseudomonadati</taxon>
        <taxon>Pseudomonadota</taxon>
        <taxon>Gammaproteobacteria</taxon>
        <taxon>Vibrionales</taxon>
        <taxon>Vibrionaceae</taxon>
        <taxon>Vibrio</taxon>
    </lineage>
</organism>
<reference key="1">
    <citation type="journal article" date="2003" name="Lancet">
        <title>Genome sequence of Vibrio parahaemolyticus: a pathogenic mechanism distinct from that of V. cholerae.</title>
        <authorList>
            <person name="Makino K."/>
            <person name="Oshima K."/>
            <person name="Kurokawa K."/>
            <person name="Yokoyama K."/>
            <person name="Uda T."/>
            <person name="Tagomori K."/>
            <person name="Iijima Y."/>
            <person name="Najima M."/>
            <person name="Nakano M."/>
            <person name="Yamashita A."/>
            <person name="Kubota Y."/>
            <person name="Kimura S."/>
            <person name="Yasunaga T."/>
            <person name="Honda T."/>
            <person name="Shinagawa H."/>
            <person name="Hattori M."/>
            <person name="Iida T."/>
        </authorList>
    </citation>
    <scope>NUCLEOTIDE SEQUENCE [LARGE SCALE GENOMIC DNA]</scope>
    <source>
        <strain>RIMD 2210633</strain>
    </source>
</reference>
<comment type="function">
    <text evidence="1">Involved in the modulation of the specificity of the ClpAP-mediated ATP-dependent protein degradation.</text>
</comment>
<comment type="subunit">
    <text evidence="1">Binds to the N-terminal domain of the chaperone ClpA.</text>
</comment>
<comment type="similarity">
    <text evidence="1">Belongs to the ClpS family.</text>
</comment>
<protein>
    <recommendedName>
        <fullName evidence="1">ATP-dependent Clp protease adapter protein ClpS</fullName>
    </recommendedName>
</protein>
<feature type="chain" id="PRO_0000215758" description="ATP-dependent Clp protease adapter protein ClpS">
    <location>
        <begin position="1"/>
        <end position="106"/>
    </location>
</feature>
<evidence type="ECO:0000255" key="1">
    <source>
        <dbReference type="HAMAP-Rule" id="MF_00302"/>
    </source>
</evidence>
<proteinExistence type="inferred from homology"/>
<name>CLPS_VIBPA</name>
<dbReference type="EMBL" id="BA000031">
    <property type="protein sequence ID" value="BAC59276.1"/>
    <property type="molecule type" value="Genomic_DNA"/>
</dbReference>
<dbReference type="RefSeq" id="NP_797392.1">
    <property type="nucleotide sequence ID" value="NC_004603.1"/>
</dbReference>
<dbReference type="RefSeq" id="WP_005456259.1">
    <property type="nucleotide sequence ID" value="NC_004603.1"/>
</dbReference>
<dbReference type="SMR" id="Q87QY5"/>
<dbReference type="GeneID" id="1188517"/>
<dbReference type="KEGG" id="vpa:VP1013"/>
<dbReference type="PATRIC" id="fig|223926.6.peg.960"/>
<dbReference type="eggNOG" id="COG2127">
    <property type="taxonomic scope" value="Bacteria"/>
</dbReference>
<dbReference type="HOGENOM" id="CLU_134358_2_1_6"/>
<dbReference type="Proteomes" id="UP000002493">
    <property type="component" value="Chromosome 1"/>
</dbReference>
<dbReference type="GO" id="GO:0030163">
    <property type="term" value="P:protein catabolic process"/>
    <property type="evidence" value="ECO:0007669"/>
    <property type="project" value="InterPro"/>
</dbReference>
<dbReference type="GO" id="GO:0006508">
    <property type="term" value="P:proteolysis"/>
    <property type="evidence" value="ECO:0007669"/>
    <property type="project" value="UniProtKB-UniRule"/>
</dbReference>
<dbReference type="FunFam" id="3.30.1390.10:FF:000002">
    <property type="entry name" value="ATP-dependent Clp protease adapter protein ClpS"/>
    <property type="match status" value="1"/>
</dbReference>
<dbReference type="Gene3D" id="3.30.1390.10">
    <property type="match status" value="1"/>
</dbReference>
<dbReference type="HAMAP" id="MF_00302">
    <property type="entry name" value="ClpS"/>
    <property type="match status" value="1"/>
</dbReference>
<dbReference type="InterPro" id="IPR022935">
    <property type="entry name" value="ClpS"/>
</dbReference>
<dbReference type="InterPro" id="IPR003769">
    <property type="entry name" value="ClpS_core"/>
</dbReference>
<dbReference type="InterPro" id="IPR014719">
    <property type="entry name" value="Ribosomal_bL12_C/ClpS-like"/>
</dbReference>
<dbReference type="NCBIfam" id="NF000670">
    <property type="entry name" value="PRK00033.1-3"/>
    <property type="match status" value="1"/>
</dbReference>
<dbReference type="NCBIfam" id="NF000672">
    <property type="entry name" value="PRK00033.1-5"/>
    <property type="match status" value="1"/>
</dbReference>
<dbReference type="PANTHER" id="PTHR33473:SF19">
    <property type="entry name" value="ATP-DEPENDENT CLP PROTEASE ADAPTER PROTEIN CLPS"/>
    <property type="match status" value="1"/>
</dbReference>
<dbReference type="PANTHER" id="PTHR33473">
    <property type="entry name" value="ATP-DEPENDENT CLP PROTEASE ADAPTER PROTEIN CLPS1, CHLOROPLASTIC"/>
    <property type="match status" value="1"/>
</dbReference>
<dbReference type="Pfam" id="PF02617">
    <property type="entry name" value="ClpS"/>
    <property type="match status" value="1"/>
</dbReference>
<dbReference type="SUPFAM" id="SSF54736">
    <property type="entry name" value="ClpS-like"/>
    <property type="match status" value="1"/>
</dbReference>
<accession>Q87QY5</accession>
<sequence length="106" mass="12248">MSKNFEWVTPDSDLLERESTKVQPPKLYNVVLNNDDYTPMDFVIEVLERFFSHDIDKATQIMLKVHYEGKAVCGTYSAEIAETKVAQVTMYARENEHPLLCTMEQA</sequence>